<proteinExistence type="inferred from homology"/>
<gene>
    <name evidence="1" type="primary">plsY</name>
    <name type="ordered locus">Spro_4296</name>
</gene>
<dbReference type="EC" id="2.3.1.275" evidence="1"/>
<dbReference type="EMBL" id="CP000826">
    <property type="protein sequence ID" value="ABV43390.1"/>
    <property type="molecule type" value="Genomic_DNA"/>
</dbReference>
<dbReference type="SMR" id="A8GJV0"/>
<dbReference type="STRING" id="399741.Spro_4296"/>
<dbReference type="KEGG" id="spe:Spro_4296"/>
<dbReference type="eggNOG" id="COG0344">
    <property type="taxonomic scope" value="Bacteria"/>
</dbReference>
<dbReference type="HOGENOM" id="CLU_081254_0_2_6"/>
<dbReference type="OrthoDB" id="9777124at2"/>
<dbReference type="UniPathway" id="UPA00085"/>
<dbReference type="GO" id="GO:0005886">
    <property type="term" value="C:plasma membrane"/>
    <property type="evidence" value="ECO:0007669"/>
    <property type="project" value="UniProtKB-SubCell"/>
</dbReference>
<dbReference type="GO" id="GO:0043772">
    <property type="term" value="F:acyl-phosphate glycerol-3-phosphate acyltransferase activity"/>
    <property type="evidence" value="ECO:0007669"/>
    <property type="project" value="UniProtKB-UniRule"/>
</dbReference>
<dbReference type="GO" id="GO:0008654">
    <property type="term" value="P:phospholipid biosynthetic process"/>
    <property type="evidence" value="ECO:0007669"/>
    <property type="project" value="UniProtKB-UniRule"/>
</dbReference>
<dbReference type="HAMAP" id="MF_01043">
    <property type="entry name" value="PlsY"/>
    <property type="match status" value="1"/>
</dbReference>
<dbReference type="InterPro" id="IPR003811">
    <property type="entry name" value="G3P_acylTferase_PlsY"/>
</dbReference>
<dbReference type="NCBIfam" id="TIGR00023">
    <property type="entry name" value="glycerol-3-phosphate 1-O-acyltransferase PlsY"/>
    <property type="match status" value="1"/>
</dbReference>
<dbReference type="PANTHER" id="PTHR30309:SF0">
    <property type="entry name" value="GLYCEROL-3-PHOSPHATE ACYLTRANSFERASE-RELATED"/>
    <property type="match status" value="1"/>
</dbReference>
<dbReference type="PANTHER" id="PTHR30309">
    <property type="entry name" value="INNER MEMBRANE PROTEIN YGIH"/>
    <property type="match status" value="1"/>
</dbReference>
<dbReference type="Pfam" id="PF02660">
    <property type="entry name" value="G3P_acyltransf"/>
    <property type="match status" value="1"/>
</dbReference>
<dbReference type="SMART" id="SM01207">
    <property type="entry name" value="G3P_acyltransf"/>
    <property type="match status" value="1"/>
</dbReference>
<feature type="chain" id="PRO_1000064219" description="Glycerol-3-phosphate acyltransferase">
    <location>
        <begin position="1"/>
        <end position="212"/>
    </location>
</feature>
<feature type="transmembrane region" description="Helical" evidence="1">
    <location>
        <begin position="5"/>
        <end position="25"/>
    </location>
</feature>
<feature type="transmembrane region" description="Helical" evidence="1">
    <location>
        <begin position="53"/>
        <end position="73"/>
    </location>
</feature>
<feature type="transmembrane region" description="Helical" evidence="1">
    <location>
        <begin position="80"/>
        <end position="100"/>
    </location>
</feature>
<feature type="transmembrane region" description="Helical" evidence="1">
    <location>
        <begin position="112"/>
        <end position="132"/>
    </location>
</feature>
<feature type="transmembrane region" description="Helical" evidence="1">
    <location>
        <begin position="138"/>
        <end position="158"/>
    </location>
</feature>
<comment type="function">
    <text evidence="1">Catalyzes the transfer of an acyl group from acyl-phosphate (acyl-PO(4)) to glycerol-3-phosphate (G3P) to form lysophosphatidic acid (LPA). This enzyme utilizes acyl-phosphate as fatty acyl donor, but not acyl-CoA or acyl-ACP.</text>
</comment>
<comment type="catalytic activity">
    <reaction evidence="1">
        <text>an acyl phosphate + sn-glycerol 3-phosphate = a 1-acyl-sn-glycero-3-phosphate + phosphate</text>
        <dbReference type="Rhea" id="RHEA:34075"/>
        <dbReference type="ChEBI" id="CHEBI:43474"/>
        <dbReference type="ChEBI" id="CHEBI:57597"/>
        <dbReference type="ChEBI" id="CHEBI:57970"/>
        <dbReference type="ChEBI" id="CHEBI:59918"/>
        <dbReference type="EC" id="2.3.1.275"/>
    </reaction>
</comment>
<comment type="pathway">
    <text evidence="1">Lipid metabolism; phospholipid metabolism.</text>
</comment>
<comment type="subunit">
    <text evidence="1">Probably interacts with PlsX.</text>
</comment>
<comment type="subcellular location">
    <subcellularLocation>
        <location evidence="1">Cell inner membrane</location>
        <topology evidence="1">Multi-pass membrane protein</topology>
    </subcellularLocation>
</comment>
<comment type="similarity">
    <text evidence="1">Belongs to the PlsY family.</text>
</comment>
<keyword id="KW-0997">Cell inner membrane</keyword>
<keyword id="KW-1003">Cell membrane</keyword>
<keyword id="KW-0444">Lipid biosynthesis</keyword>
<keyword id="KW-0443">Lipid metabolism</keyword>
<keyword id="KW-0472">Membrane</keyword>
<keyword id="KW-0594">Phospholipid biosynthesis</keyword>
<keyword id="KW-1208">Phospholipid metabolism</keyword>
<keyword id="KW-0808">Transferase</keyword>
<keyword id="KW-0812">Transmembrane</keyword>
<keyword id="KW-1133">Transmembrane helix</keyword>
<sequence length="212" mass="23153">MSATALGMIIFAYLCGSISSAILVCRIARLPDPRENGSGNPGATNVLRIGGRVAAAAVLVFDILKGMLPVWLAYKLDVPPLYLGLTAIAACLGHIYPVFFHFRGGKGVATAFGAIAPIGWDLTGLMTGTWLLTVLLSGYSSLGAIISALIAPFYVWWFKPQFTFPVAMLSCLILMRHHDNIQRLWRGQEGKIWGVFRKKKNDAAEQEEKKEE</sequence>
<protein>
    <recommendedName>
        <fullName evidence="1">Glycerol-3-phosphate acyltransferase</fullName>
    </recommendedName>
    <alternativeName>
        <fullName evidence="1">Acyl-PO4 G3P acyltransferase</fullName>
    </alternativeName>
    <alternativeName>
        <fullName evidence="1">Acyl-phosphate--glycerol-3-phosphate acyltransferase</fullName>
    </alternativeName>
    <alternativeName>
        <fullName evidence="1">G3P acyltransferase</fullName>
        <shortName evidence="1">GPAT</shortName>
        <ecNumber evidence="1">2.3.1.275</ecNumber>
    </alternativeName>
    <alternativeName>
        <fullName evidence="1">Lysophosphatidic acid synthase</fullName>
        <shortName evidence="1">LPA synthase</shortName>
    </alternativeName>
</protein>
<organism>
    <name type="scientific">Serratia proteamaculans (strain 568)</name>
    <dbReference type="NCBI Taxonomy" id="399741"/>
    <lineage>
        <taxon>Bacteria</taxon>
        <taxon>Pseudomonadati</taxon>
        <taxon>Pseudomonadota</taxon>
        <taxon>Gammaproteobacteria</taxon>
        <taxon>Enterobacterales</taxon>
        <taxon>Yersiniaceae</taxon>
        <taxon>Serratia</taxon>
    </lineage>
</organism>
<evidence type="ECO:0000255" key="1">
    <source>
        <dbReference type="HAMAP-Rule" id="MF_01043"/>
    </source>
</evidence>
<accession>A8GJV0</accession>
<reference key="1">
    <citation type="submission" date="2007-09" db="EMBL/GenBank/DDBJ databases">
        <title>Complete sequence of chromosome of Serratia proteamaculans 568.</title>
        <authorList>
            <consortium name="US DOE Joint Genome Institute"/>
            <person name="Copeland A."/>
            <person name="Lucas S."/>
            <person name="Lapidus A."/>
            <person name="Barry K."/>
            <person name="Glavina del Rio T."/>
            <person name="Dalin E."/>
            <person name="Tice H."/>
            <person name="Pitluck S."/>
            <person name="Chain P."/>
            <person name="Malfatti S."/>
            <person name="Shin M."/>
            <person name="Vergez L."/>
            <person name="Schmutz J."/>
            <person name="Larimer F."/>
            <person name="Land M."/>
            <person name="Hauser L."/>
            <person name="Kyrpides N."/>
            <person name="Kim E."/>
            <person name="Taghavi S."/>
            <person name="Newman L."/>
            <person name="Vangronsveld J."/>
            <person name="van der Lelie D."/>
            <person name="Richardson P."/>
        </authorList>
    </citation>
    <scope>NUCLEOTIDE SEQUENCE [LARGE SCALE GENOMIC DNA]</scope>
    <source>
        <strain>568</strain>
    </source>
</reference>
<name>PLSY_SERP5</name>